<evidence type="ECO:0000250" key="1"/>
<evidence type="ECO:0000250" key="2">
    <source>
        <dbReference type="UniProtKB" id="Q9BSM1"/>
    </source>
</evidence>
<evidence type="ECO:0000255" key="3">
    <source>
        <dbReference type="PROSITE-ProRule" id="PRU00175"/>
    </source>
</evidence>
<evidence type="ECO:0000269" key="4">
    <source>
    </source>
</evidence>
<evidence type="ECO:0000305" key="5"/>
<proteinExistence type="evidence at transcript level"/>
<keyword id="KW-0007">Acetylation</keyword>
<keyword id="KW-1017">Isopeptide bond</keyword>
<keyword id="KW-0479">Metal-binding</keyword>
<keyword id="KW-0539">Nucleus</keyword>
<keyword id="KW-0597">Phosphoprotein</keyword>
<keyword id="KW-1185">Reference proteome</keyword>
<keyword id="KW-0678">Repressor</keyword>
<keyword id="KW-0804">Transcription</keyword>
<keyword id="KW-0805">Transcription regulation</keyword>
<keyword id="KW-0832">Ubl conjugation</keyword>
<keyword id="KW-0862">Zinc</keyword>
<keyword id="KW-0863">Zinc-finger</keyword>
<gene>
    <name type="primary">Pcgf1</name>
    <name type="synonym">Nspc1</name>
    <name type="synonym">Rnf68</name>
</gene>
<comment type="function">
    <text evidence="2">Component of the Polycomb group (PcG) multiprotein BCOR complex, a complex required to maintain the transcriptionally repressive state of some genes, such as BCL6 and the cyclin-dependent kinase inhibitor, CDKN1A. Transcriptional repressor that may be targeted to the DNA by BCL6; this transcription repressor activity may be related to PKC signaling pathway. Represses CDKN1A expression by binding to its promoter, and this repression is dependent on the retinoic acid response element (RARE element). Promotes cell cycle progression and enhances cell proliferation as well. May have a positive role in tumor cell growth by down-regulating CDKN1A. Component of a Polycomb group (PcG) multiprotein PRC1-like complex, a complex class required to maintain the transcriptionally repressive state of many genes, including Hox genes, throughout development. PcG PRC1 complex acts via chromatin remodeling and modification of histones; it mediates monoubiquitination of histone H2A 'Lys-119', rendering chromatin heritably changed in its expressibility. Within the PRC1-like complex, regulates RNF2 ubiquitin ligase activity. Regulates the expression of DPPA4 and NANOG in the NT2 embryonic carcinoma cells.</text>
</comment>
<comment type="subunit">
    <text evidence="2">Interacts with BCORL1, forming heterodimers (By similarity). The PCGF1-BCORL1 heterodimeric complex interacts with the KDM2B-SKP1 heterodimeric complex to form a homotetrameric polycomb repression complex 1 (PRC1.1) (By similarity). Component of the repressive BCOR complex containing a Polycomb group subcomplex at least composed of RYBP, RING1 and RNF2/RING2 (By similarity). Specifically interacts with BCOR, RING1 and RNF2/RING2 (By similarity). Component of a PRC1-like complex (By similarity). Interacts with CBX6, CBX7 and CBX8 (By similarity). Interacts with DPPA4, NANOG, POU5F1 and RYBP (By similarity).</text>
</comment>
<comment type="subcellular location">
    <subcellularLocation>
        <location evidence="2">Nucleus</location>
    </subcellularLocation>
</comment>
<comment type="developmental stage">
    <text evidence="4">Expressed in the otic vesicle, urogenital bud and dorsal root ganglia at 10.5 dpc, in the neural tube and neural crest cell derivatives of the peripheral nervous system at 11.5 dpc.</text>
</comment>
<comment type="sequence caution" evidence="5">
    <conflict type="erroneous initiation">
        <sequence resource="EMBL-CDS" id="AAH28560"/>
    </conflict>
    <text>Truncated N-terminus.</text>
</comment>
<dbReference type="EMBL" id="AC104324">
    <property type="status" value="NOT_ANNOTATED_CDS"/>
    <property type="molecule type" value="Genomic_DNA"/>
</dbReference>
<dbReference type="EMBL" id="BC028560">
    <property type="protein sequence ID" value="AAH28560.1"/>
    <property type="status" value="ALT_INIT"/>
    <property type="molecule type" value="mRNA"/>
</dbReference>
<dbReference type="CCDS" id="CCDS20270.1"/>
<dbReference type="RefSeq" id="NP_932109.2">
    <property type="nucleotide sequence ID" value="NM_197992.2"/>
</dbReference>
<dbReference type="SMR" id="Q8R023"/>
<dbReference type="BioGRID" id="213711">
    <property type="interactions" value="33"/>
</dbReference>
<dbReference type="FunCoup" id="Q8R023">
    <property type="interactions" value="1940"/>
</dbReference>
<dbReference type="IntAct" id="Q8R023">
    <property type="interactions" value="29"/>
</dbReference>
<dbReference type="STRING" id="10090.ENSMUSP00000090277"/>
<dbReference type="iPTMnet" id="Q8R023"/>
<dbReference type="PhosphoSitePlus" id="Q8R023"/>
<dbReference type="PaxDb" id="10090-ENSMUSP00000130614"/>
<dbReference type="PeptideAtlas" id="Q8R023"/>
<dbReference type="ProteomicsDB" id="287965"/>
<dbReference type="Antibodypedia" id="1867">
    <property type="antibodies" value="151 antibodies from 25 providers"/>
</dbReference>
<dbReference type="DNASU" id="69837"/>
<dbReference type="Ensembl" id="ENSMUST00000165164.9">
    <property type="protein sequence ID" value="ENSMUSP00000130614.3"/>
    <property type="gene ID" value="ENSMUSG00000069678.11"/>
</dbReference>
<dbReference type="GeneID" id="69837"/>
<dbReference type="KEGG" id="mmu:69837"/>
<dbReference type="UCSC" id="uc009cmg.1">
    <property type="organism name" value="mouse"/>
</dbReference>
<dbReference type="AGR" id="MGI:1917087"/>
<dbReference type="CTD" id="84759"/>
<dbReference type="MGI" id="MGI:1917087">
    <property type="gene designation" value="Pcgf1"/>
</dbReference>
<dbReference type="VEuPathDB" id="HostDB:ENSMUSG00000069678"/>
<dbReference type="eggNOG" id="KOG2660">
    <property type="taxonomic scope" value="Eukaryota"/>
</dbReference>
<dbReference type="GeneTree" id="ENSGT00940000159651"/>
<dbReference type="InParanoid" id="Q8R023"/>
<dbReference type="OMA" id="AFKMASP"/>
<dbReference type="OrthoDB" id="1305878at2759"/>
<dbReference type="PhylomeDB" id="Q8R023"/>
<dbReference type="TreeFam" id="TF324206"/>
<dbReference type="BioGRID-ORCS" id="69837">
    <property type="hits" value="2 hits in 65 CRISPR screens"/>
</dbReference>
<dbReference type="ChiTaRS" id="Pcgf1">
    <property type="organism name" value="mouse"/>
</dbReference>
<dbReference type="PRO" id="PR:Q8R023"/>
<dbReference type="Proteomes" id="UP000000589">
    <property type="component" value="Chromosome 6"/>
</dbReference>
<dbReference type="RNAct" id="Q8R023">
    <property type="molecule type" value="protein"/>
</dbReference>
<dbReference type="Bgee" id="ENSMUSG00000069678">
    <property type="expression patterns" value="Expressed in secondary oocyte and 108 other cell types or tissues"/>
</dbReference>
<dbReference type="ExpressionAtlas" id="Q8R023">
    <property type="expression patterns" value="baseline and differential"/>
</dbReference>
<dbReference type="GO" id="GO:0005654">
    <property type="term" value="C:nucleoplasm"/>
    <property type="evidence" value="ECO:0007669"/>
    <property type="project" value="Ensembl"/>
</dbReference>
<dbReference type="GO" id="GO:0005634">
    <property type="term" value="C:nucleus"/>
    <property type="evidence" value="ECO:0000314"/>
    <property type="project" value="UniProtKB"/>
</dbReference>
<dbReference type="GO" id="GO:0031519">
    <property type="term" value="C:PcG protein complex"/>
    <property type="evidence" value="ECO:0000314"/>
    <property type="project" value="UniProtKB"/>
</dbReference>
<dbReference type="GO" id="GO:0008270">
    <property type="term" value="F:zinc ion binding"/>
    <property type="evidence" value="ECO:0007669"/>
    <property type="project" value="UniProtKB-KW"/>
</dbReference>
<dbReference type="GO" id="GO:0006338">
    <property type="term" value="P:chromatin remodeling"/>
    <property type="evidence" value="ECO:0000250"/>
    <property type="project" value="UniProtKB"/>
</dbReference>
<dbReference type="CDD" id="cd17081">
    <property type="entry name" value="RAWUL_PCGF1"/>
    <property type="match status" value="1"/>
</dbReference>
<dbReference type="CDD" id="cd16733">
    <property type="entry name" value="RING-HC_PCGF1"/>
    <property type="match status" value="1"/>
</dbReference>
<dbReference type="FunFam" id="3.10.20.90:FF:000099">
    <property type="entry name" value="Polycomb group RING finger protein 1"/>
    <property type="match status" value="1"/>
</dbReference>
<dbReference type="FunFam" id="3.30.40.10:FF:000122">
    <property type="entry name" value="polycomb group RING finger protein 1"/>
    <property type="match status" value="1"/>
</dbReference>
<dbReference type="Gene3D" id="3.10.20.90">
    <property type="entry name" value="Phosphatidylinositol 3-kinase Catalytic Subunit, Chain A, domain 1"/>
    <property type="match status" value="1"/>
</dbReference>
<dbReference type="Gene3D" id="3.30.40.10">
    <property type="entry name" value="Zinc/RING finger domain, C3HC4 (zinc finger)"/>
    <property type="match status" value="1"/>
</dbReference>
<dbReference type="InterPro" id="IPR032443">
    <property type="entry name" value="RAWUL"/>
</dbReference>
<dbReference type="InterPro" id="IPR001841">
    <property type="entry name" value="Znf_RING"/>
</dbReference>
<dbReference type="InterPro" id="IPR013083">
    <property type="entry name" value="Znf_RING/FYVE/PHD"/>
</dbReference>
<dbReference type="InterPro" id="IPR017907">
    <property type="entry name" value="Znf_RING_CS"/>
</dbReference>
<dbReference type="PANTHER" id="PTHR10825:SF29">
    <property type="entry name" value="POLYCOMB GROUP RING FINGER PROTEIN 1"/>
    <property type="match status" value="1"/>
</dbReference>
<dbReference type="PANTHER" id="PTHR10825">
    <property type="entry name" value="RING FINGER DOMAIN-CONTAINING, POLYCOMB GROUP COMPONENT"/>
    <property type="match status" value="1"/>
</dbReference>
<dbReference type="Pfam" id="PF16207">
    <property type="entry name" value="RAWUL"/>
    <property type="match status" value="1"/>
</dbReference>
<dbReference type="Pfam" id="PF13923">
    <property type="entry name" value="zf-C3HC4_2"/>
    <property type="match status" value="1"/>
</dbReference>
<dbReference type="SMART" id="SM00184">
    <property type="entry name" value="RING"/>
    <property type="match status" value="1"/>
</dbReference>
<dbReference type="SUPFAM" id="SSF57850">
    <property type="entry name" value="RING/U-box"/>
    <property type="match status" value="1"/>
</dbReference>
<dbReference type="PROSITE" id="PS00518">
    <property type="entry name" value="ZF_RING_1"/>
    <property type="match status" value="1"/>
</dbReference>
<dbReference type="PROSITE" id="PS50089">
    <property type="entry name" value="ZF_RING_2"/>
    <property type="match status" value="1"/>
</dbReference>
<name>PCGF1_MOUSE</name>
<organism>
    <name type="scientific">Mus musculus</name>
    <name type="common">Mouse</name>
    <dbReference type="NCBI Taxonomy" id="10090"/>
    <lineage>
        <taxon>Eukaryota</taxon>
        <taxon>Metazoa</taxon>
        <taxon>Chordata</taxon>
        <taxon>Craniata</taxon>
        <taxon>Vertebrata</taxon>
        <taxon>Euteleostomi</taxon>
        <taxon>Mammalia</taxon>
        <taxon>Eutheria</taxon>
        <taxon>Euarchontoglires</taxon>
        <taxon>Glires</taxon>
        <taxon>Rodentia</taxon>
        <taxon>Myomorpha</taxon>
        <taxon>Muroidea</taxon>
        <taxon>Muridae</taxon>
        <taxon>Murinae</taxon>
        <taxon>Mus</taxon>
        <taxon>Mus</taxon>
    </lineage>
</organism>
<feature type="initiator methionine" description="Removed" evidence="2">
    <location>
        <position position="1"/>
    </location>
</feature>
<feature type="chain" id="PRO_0000277856" description="Polycomb group RING finger protein 1">
    <location>
        <begin position="2"/>
        <end position="259"/>
    </location>
</feature>
<feature type="zinc finger region" description="RING-type" evidence="3">
    <location>
        <begin position="47"/>
        <end position="86"/>
    </location>
</feature>
<feature type="region of interest" description="Necessary for repressor activity" evidence="1">
    <location>
        <begin position="86"/>
        <end position="247"/>
    </location>
</feature>
<feature type="region of interest" description="Required for the interaction with the KDM2B-SKP1 heterodimeric complex" evidence="2">
    <location>
        <begin position="150"/>
        <end position="255"/>
    </location>
</feature>
<feature type="region of interest" description="RING-finger and WD40-associated ubiquitin-like domain (RAWUL); sufficient for interaction with BCOR and BCORL1" evidence="2">
    <location>
        <begin position="167"/>
        <end position="255"/>
    </location>
</feature>
<feature type="modified residue" description="N-acetylalanine" evidence="2">
    <location>
        <position position="2"/>
    </location>
</feature>
<feature type="modified residue" description="Phosphoserine" evidence="2">
    <location>
        <position position="3"/>
    </location>
</feature>
<feature type="cross-link" description="Glycyl lysine isopeptide (Lys-Gly) (interchain with G-Cter in SUMO2)" evidence="2">
    <location>
        <position position="24"/>
    </location>
</feature>
<feature type="cross-link" description="Glycyl lysine isopeptide (Lys-Gly) (interchain with G-Cter in SUMO2)" evidence="2">
    <location>
        <position position="88"/>
    </location>
</feature>
<reference key="1">
    <citation type="journal article" date="2009" name="PLoS Biol.">
        <title>Lineage-specific biology revealed by a finished genome assembly of the mouse.</title>
        <authorList>
            <person name="Church D.M."/>
            <person name="Goodstadt L."/>
            <person name="Hillier L.W."/>
            <person name="Zody M.C."/>
            <person name="Goldstein S."/>
            <person name="She X."/>
            <person name="Bult C.J."/>
            <person name="Agarwala R."/>
            <person name="Cherry J.L."/>
            <person name="DiCuccio M."/>
            <person name="Hlavina W."/>
            <person name="Kapustin Y."/>
            <person name="Meric P."/>
            <person name="Maglott D."/>
            <person name="Birtle Z."/>
            <person name="Marques A.C."/>
            <person name="Graves T."/>
            <person name="Zhou S."/>
            <person name="Teague B."/>
            <person name="Potamousis K."/>
            <person name="Churas C."/>
            <person name="Place M."/>
            <person name="Herschleb J."/>
            <person name="Runnheim R."/>
            <person name="Forrest D."/>
            <person name="Amos-Landgraf J."/>
            <person name="Schwartz D.C."/>
            <person name="Cheng Z."/>
            <person name="Lindblad-Toh K."/>
            <person name="Eichler E.E."/>
            <person name="Ponting C.P."/>
        </authorList>
    </citation>
    <scope>NUCLEOTIDE SEQUENCE [LARGE SCALE GENOMIC DNA]</scope>
    <source>
        <strain>C57BL/6J</strain>
    </source>
</reference>
<reference key="2">
    <citation type="journal article" date="2004" name="Genome Res.">
        <title>The status, quality, and expansion of the NIH full-length cDNA project: the Mammalian Gene Collection (MGC).</title>
        <authorList>
            <consortium name="The MGC Project Team"/>
        </authorList>
    </citation>
    <scope>NUCLEOTIDE SEQUENCE [LARGE SCALE MRNA] OF 3-259</scope>
    <source>
        <strain>C57BL/6J</strain>
        <tissue>Thymus</tissue>
    </source>
</reference>
<reference key="3">
    <citation type="journal article" date="2001" name="Mech. Dev.">
        <title>NSPc1, a novel mammalian Polycomb gene, is expressed in neural crest-derived structures of the peripheral nervous system.</title>
        <authorList>
            <person name="Nunes M."/>
            <person name="Blanc I."/>
            <person name="Maes J."/>
            <person name="Fellous M."/>
            <person name="Robert B."/>
            <person name="McElreavey K."/>
        </authorList>
    </citation>
    <scope>DEVELOPMENTAL STAGE</scope>
</reference>
<protein>
    <recommendedName>
        <fullName>Polycomb group RING finger protein 1</fullName>
    </recommendedName>
    <alternativeName>
        <fullName>Nervous system Polycomb-1</fullName>
        <shortName>NSPc1</shortName>
    </alternativeName>
    <alternativeName>
        <fullName>RING finger protein 68</fullName>
    </alternativeName>
</protein>
<sequence>MASPQGGQIAIAMRLRNQLQSVYKMDPLRNEEEVRVKIKDLNEHIVCCLCAGYFVDATTITECLHTFCKSCIVKYLQTSKYCPMCNIKIHETQPLLNLKLDRVMQDIVYKLVPGLQDSEEKRIREFYQSRGLDRVSQPSGEEPALSNLGLPFSSFDHSKAHYYRYDEQLSLCLERLSSGKDKNKNVLQNKYVRCSVRAEVRHLRRVLCHRLMLNPQHVQLLFDNEVLPDHMTMKQLWLSRWFGKPSPLLLQYSVKEKRR</sequence>
<accession>Q8R023</accession>